<evidence type="ECO:0000255" key="1"/>
<evidence type="ECO:0000305" key="2"/>
<protein>
    <recommendedName>
        <fullName>Probable protein-export membrane protein secG</fullName>
    </recommendedName>
</protein>
<gene>
    <name type="primary">secG</name>
    <name type="synonym">ycf47</name>
</gene>
<comment type="function">
    <text evidence="2">Involved in protein export. Participates in an early event of protein translocation across the chloroplast thylakoid membrane (Potential).</text>
</comment>
<comment type="subcellular location">
    <subcellularLocation>
        <location evidence="2">Plastid</location>
        <location evidence="2">Chloroplast thylakoid membrane</location>
        <topology evidence="2">Multi-pass membrane protein</topology>
    </subcellularLocation>
</comment>
<comment type="similarity">
    <text evidence="2">Belongs to the SecG family.</text>
</comment>
<keyword id="KW-0150">Chloroplast</keyword>
<keyword id="KW-0472">Membrane</keyword>
<keyword id="KW-0934">Plastid</keyword>
<keyword id="KW-0653">Protein transport</keyword>
<keyword id="KW-0793">Thylakoid</keyword>
<keyword id="KW-0811">Translocation</keyword>
<keyword id="KW-0812">Transmembrane</keyword>
<keyword id="KW-1133">Transmembrane helix</keyword>
<keyword id="KW-0813">Transport</keyword>
<name>SECG_SKECO</name>
<proteinExistence type="inferred from homology"/>
<dbReference type="EMBL" id="AJ132263">
    <property type="protein sequence ID" value="CAA10620.1"/>
    <property type="molecule type" value="Genomic_DNA"/>
</dbReference>
<dbReference type="SMR" id="O96799"/>
<dbReference type="GO" id="GO:0009535">
    <property type="term" value="C:chloroplast thylakoid membrane"/>
    <property type="evidence" value="ECO:0007669"/>
    <property type="project" value="UniProtKB-SubCell"/>
</dbReference>
<dbReference type="GO" id="GO:0015450">
    <property type="term" value="F:protein-transporting ATPase activity"/>
    <property type="evidence" value="ECO:0007669"/>
    <property type="project" value="InterPro"/>
</dbReference>
<dbReference type="GO" id="GO:0009306">
    <property type="term" value="P:protein secretion"/>
    <property type="evidence" value="ECO:0007669"/>
    <property type="project" value="InterPro"/>
</dbReference>
<dbReference type="InterPro" id="IPR004692">
    <property type="entry name" value="SecG"/>
</dbReference>
<dbReference type="NCBIfam" id="TIGR00810">
    <property type="entry name" value="secG"/>
    <property type="match status" value="1"/>
</dbReference>
<dbReference type="Pfam" id="PF03840">
    <property type="entry name" value="SecG"/>
    <property type="match status" value="1"/>
</dbReference>
<geneLocation type="chloroplast"/>
<feature type="chain" id="PRO_0000217371" description="Probable protein-export membrane protein secG">
    <location>
        <begin position="1"/>
        <end position="69"/>
    </location>
</feature>
<feature type="transmembrane region" description="Helical" evidence="1">
    <location>
        <begin position="1"/>
        <end position="21"/>
    </location>
</feature>
<feature type="transmembrane region" description="Helical" evidence="1">
    <location>
        <begin position="49"/>
        <end position="69"/>
    </location>
</feature>
<accession>O96799</accession>
<organism>
    <name type="scientific">Skeletonema costatum</name>
    <name type="common">Marine centric diatom</name>
    <name type="synonym">Melosira costata</name>
    <dbReference type="NCBI Taxonomy" id="2843"/>
    <lineage>
        <taxon>Eukaryota</taxon>
        <taxon>Sar</taxon>
        <taxon>Stramenopiles</taxon>
        <taxon>Ochrophyta</taxon>
        <taxon>Bacillariophyta</taxon>
        <taxon>Coscinodiscophyceae</taxon>
        <taxon>Thalassiosirophycidae</taxon>
        <taxon>Thalassiosirales</taxon>
        <taxon>Skeletonemataceae</taxon>
        <taxon>Skeletonema</taxon>
    </lineage>
</organism>
<reference key="1">
    <citation type="journal article" date="1999" name="DNA Seq.">
        <title>Comparison of gene arrangements of chloroplasts between two centric diatoms, Skeletonema costatum and Odontella sinensis.</title>
        <authorList>
            <person name="Tada N."/>
            <person name="Shibata S."/>
            <person name="Otsuka S."/>
            <person name="Namba K."/>
            <person name="Oyaizu H."/>
        </authorList>
    </citation>
    <scope>NUCLEOTIDE SEQUENCE [GENOMIC DNA]</scope>
    <source>
        <strain>NIES-323 / Sk-85w</strain>
    </source>
</reference>
<sequence>MLKIIWVILSIVLIGLIFLRTPQNQGLASFSTKSNLLGSPSSAEQFLNNLTIILMIGYFSFAVFLNFSI</sequence>